<organism>
    <name type="scientific">Staphylococcus epidermidis (strain ATCC 12228 / FDA PCI 1200)</name>
    <dbReference type="NCBI Taxonomy" id="176280"/>
    <lineage>
        <taxon>Bacteria</taxon>
        <taxon>Bacillati</taxon>
        <taxon>Bacillota</taxon>
        <taxon>Bacilli</taxon>
        <taxon>Bacillales</taxon>
        <taxon>Staphylococcaceae</taxon>
        <taxon>Staphylococcus</taxon>
    </lineage>
</organism>
<feature type="chain" id="PRO_0000330721" description="Antitoxin MazE">
    <location>
        <begin position="1"/>
        <end position="56"/>
    </location>
</feature>
<evidence type="ECO:0000250" key="1">
    <source>
        <dbReference type="UniProtKB" id="P0C7B4"/>
    </source>
</evidence>
<evidence type="ECO:0000305" key="2"/>
<comment type="function">
    <text evidence="1">Antitoxin component of a type II toxin-antitoxin (TA) system. Labile antitoxin that binds to cognate MazF toxin and counteracts its endoribonuclease activity.</text>
</comment>
<comment type="subunit">
    <text evidence="1">Forms a complex with cognate toxin MazF which inhibits the endoribonuclease activity of MazF.</text>
</comment>
<comment type="similarity">
    <text evidence="2">Belongs to the MazE/EndoAI family.</text>
</comment>
<name>MAZE_STAES</name>
<proteinExistence type="inferred from homology"/>
<protein>
    <recommendedName>
        <fullName>Antitoxin MazE</fullName>
    </recommendedName>
</protein>
<accession>Q8CRQ0</accession>
<sequence>MLSFNQNRNHSLEQSLKEGYAQMADLNLSLATEAFPIECEACDCNESHLISNSKNE</sequence>
<keyword id="KW-1277">Toxin-antitoxin system</keyword>
<reference key="1">
    <citation type="journal article" date="2003" name="Mol. Microbiol.">
        <title>Genome-based analysis of virulence genes in a non-biofilm-forming Staphylococcus epidermidis strain (ATCC 12228).</title>
        <authorList>
            <person name="Zhang Y.-Q."/>
            <person name="Ren S.-X."/>
            <person name="Li H.-L."/>
            <person name="Wang Y.-X."/>
            <person name="Fu G."/>
            <person name="Yang J."/>
            <person name="Qin Z.-Q."/>
            <person name="Miao Y.-G."/>
            <person name="Wang W.-Y."/>
            <person name="Chen R.-S."/>
            <person name="Shen Y."/>
            <person name="Chen Z."/>
            <person name="Yuan Z.-H."/>
            <person name="Zhao G.-P."/>
            <person name="Qu D."/>
            <person name="Danchin A."/>
            <person name="Wen Y.-M."/>
        </authorList>
    </citation>
    <scope>NUCLEOTIDE SEQUENCE [LARGE SCALE GENOMIC DNA]</scope>
    <source>
        <strain>ATCC 12228 / FDA PCI 1200</strain>
    </source>
</reference>
<gene>
    <name type="primary">mazE</name>
    <name type="ordered locus">SE_1673</name>
</gene>
<dbReference type="EMBL" id="AE015929">
    <property type="protein sequence ID" value="AAO05272.1"/>
    <property type="molecule type" value="Genomic_DNA"/>
</dbReference>
<dbReference type="RefSeq" id="NP_765228.1">
    <property type="nucleotide sequence ID" value="NC_004461.1"/>
</dbReference>
<dbReference type="RefSeq" id="WP_001829931.1">
    <property type="nucleotide sequence ID" value="NZ_WBME01000071.1"/>
</dbReference>
<dbReference type="SMR" id="Q8CRQ0"/>
<dbReference type="GeneID" id="50018226"/>
<dbReference type="KEGG" id="sep:SE_1673"/>
<dbReference type="PATRIC" id="fig|176280.10.peg.1634"/>
<dbReference type="eggNOG" id="ENOG50305BV">
    <property type="taxonomic scope" value="Bacteria"/>
</dbReference>
<dbReference type="HOGENOM" id="CLU_3012108_0_0_9"/>
<dbReference type="OrthoDB" id="2418545at2"/>
<dbReference type="Proteomes" id="UP000001411">
    <property type="component" value="Chromosome"/>
</dbReference>
<dbReference type="GO" id="GO:0006355">
    <property type="term" value="P:regulation of DNA-templated transcription"/>
    <property type="evidence" value="ECO:0007669"/>
    <property type="project" value="InterPro"/>
</dbReference>
<dbReference type="Gene3D" id="1.10.1220.10">
    <property type="entry name" value="Met repressor-like"/>
    <property type="match status" value="1"/>
</dbReference>
<dbReference type="InterPro" id="IPR013321">
    <property type="entry name" value="Arc_rbn_hlx_hlx"/>
</dbReference>
<dbReference type="InterPro" id="IPR048242">
    <property type="entry name" value="MazE"/>
</dbReference>
<dbReference type="NCBIfam" id="NF041459">
    <property type="entry name" value="antitoxMazE_Staph"/>
    <property type="match status" value="1"/>
</dbReference>